<organism>
    <name type="scientific">Mesobuthus eupeus</name>
    <name type="common">Lesser Asian scorpion</name>
    <name type="synonym">Buthus eupeus</name>
    <dbReference type="NCBI Taxonomy" id="34648"/>
    <lineage>
        <taxon>Eukaryota</taxon>
        <taxon>Metazoa</taxon>
        <taxon>Ecdysozoa</taxon>
        <taxon>Arthropoda</taxon>
        <taxon>Chelicerata</taxon>
        <taxon>Arachnida</taxon>
        <taxon>Scorpiones</taxon>
        <taxon>Buthida</taxon>
        <taxon>Buthoidea</taxon>
        <taxon>Buthidae</taxon>
        <taxon>Mesobuthus</taxon>
    </lineage>
</organism>
<accession>P86407</accession>
<accession>E4VP02</accession>
<evidence type="ECO:0000269" key="1">
    <source>
    </source>
</evidence>
<evidence type="ECO:0000269" key="2">
    <source ref="2"/>
</evidence>
<evidence type="ECO:0000303" key="3">
    <source>
    </source>
</evidence>
<evidence type="ECO:0000303" key="4">
    <source ref="2"/>
</evidence>
<evidence type="ECO:0000305" key="5"/>
<evidence type="ECO:0000305" key="6">
    <source ref="2"/>
</evidence>
<evidence type="ECO:0000312" key="7">
    <source>
        <dbReference type="EMBL" id="ABR20115.1"/>
    </source>
</evidence>
<feature type="signal peptide" evidence="2">
    <location>
        <begin position="1"/>
        <end position="22"/>
    </location>
</feature>
<feature type="chain" id="PRO_0000401129" description="Meucin-49" evidence="1 2">
    <location>
        <begin position="23"/>
        <end position="71"/>
    </location>
</feature>
<feature type="mutagenesis site" description="Important decrease in antibacterial activity on nearly all bacteria tested. 18-fold decrease in insecticidal activity. No change on hemolysis." evidence="1">
    <location>
        <begin position="54"/>
        <end position="71"/>
    </location>
</feature>
<protein>
    <recommendedName>
        <fullName evidence="4">Meucin-49</fullName>
    </recommendedName>
    <alternativeName>
        <fullName evidence="3">Venom antimicrobial peptide</fullName>
        <shortName evidence="7">VAMP-1</shortName>
    </alternativeName>
</protein>
<dbReference type="EMBL" id="EF442050">
    <property type="protein sequence ID" value="ABR20115.1"/>
    <property type="molecule type" value="mRNA"/>
</dbReference>
<dbReference type="SMR" id="P86407"/>
<dbReference type="GO" id="GO:0005576">
    <property type="term" value="C:extracellular region"/>
    <property type="evidence" value="ECO:0007669"/>
    <property type="project" value="UniProtKB-SubCell"/>
</dbReference>
<dbReference type="GO" id="GO:0090729">
    <property type="term" value="F:toxin activity"/>
    <property type="evidence" value="ECO:0007669"/>
    <property type="project" value="UniProtKB-KW"/>
</dbReference>
<dbReference type="GO" id="GO:0042742">
    <property type="term" value="P:defense response to bacterium"/>
    <property type="evidence" value="ECO:0007669"/>
    <property type="project" value="UniProtKB-KW"/>
</dbReference>
<dbReference type="GO" id="GO:0050832">
    <property type="term" value="P:defense response to fungus"/>
    <property type="evidence" value="ECO:0007669"/>
    <property type="project" value="UniProtKB-KW"/>
</dbReference>
<dbReference type="GO" id="GO:0031640">
    <property type="term" value="P:killing of cells of another organism"/>
    <property type="evidence" value="ECO:0007669"/>
    <property type="project" value="UniProtKB-KW"/>
</dbReference>
<proteinExistence type="evidence at protein level"/>
<keyword id="KW-0044">Antibiotic</keyword>
<keyword id="KW-0929">Antimicrobial</keyword>
<keyword id="KW-0165">Cleavage on pair of basic residues</keyword>
<keyword id="KW-0204">Cytolysis</keyword>
<keyword id="KW-0903">Direct protein sequencing</keyword>
<keyword id="KW-0295">Fungicide</keyword>
<keyword id="KW-0964">Secreted</keyword>
<keyword id="KW-0732">Signal</keyword>
<keyword id="KW-0800">Toxin</keyword>
<sequence>MNKKILLVIFIVTMLIVDEVNSFKFGSFIKRMWRSKLAKKLRAKGKELLRDYANRVLSPEEEAAAPAPVPAKRRR</sequence>
<name>NDB2_MESEU</name>
<comment type="function">
    <text evidence="1 2">Insecticidal toxin and antimicrobial peptide with potent activity against both Gram-negative and -positive bacteria, as well as against fungi (PubMed:29770866, Ref.2). Acts by disrupting bacterial membrane integrity (PubMed:29770866). Shows broad-spectrum and highly potent bactericidal activities against the Gram-positive bacteria B.cereus, B.megaterium, B.subtilis, M.luteus, S.aureus, S.epidermidis, S.warneri, S.griseus, S.scabiei, S.mutans, S.salivarius, and S.sanguinis (PubMed:29770866). Also exhibits a wide spectrum of activity against the Gram-negative bacteria A.faecalis, E.coli, P.aeruginosa, P.solanacearum, S.enterica, S.marcescens, and S.maltophilia (PubMed:29770866). Also shows antimicrobial activities against the fungal strains Aspergillus flavus, A.fumigatus, A.nidulans, A.niger, Beauveria bassiana, and Saccharomyces cerevisiae (PubMed:29770866). Its antibiotic activity is potentiated by other antibacterial peptides such as MeuNaTxbeta-4 (PubMed:29770866). Also induces cytolysis on mice, lizards and birds erythrocytes (PubMed:29770866).</text>
</comment>
<comment type="subcellular location">
    <subcellularLocation>
        <location evidence="2">Secreted</location>
    </subcellularLocation>
</comment>
<comment type="tissue specificity">
    <text evidence="6">Expressed by the venom gland.</text>
</comment>
<comment type="domain">
    <text evidence="1">Amphipathic and cationic peptide with an alpha-helical structure.</text>
</comment>
<comment type="mass spectrometry"/>
<comment type="mass spectrometry"/>
<comment type="toxic dose">
    <text evidence="1">LD(50) is 1.9 nmol/g in housefly adults, while LD(100) is 5 nmol/g in the same species.</text>
</comment>
<comment type="similarity">
    <text evidence="5">Belongs to the non-disulfide-bridged peptide (NDBP) superfamily. Long chain multifunctional peptide (group 2) family.</text>
</comment>
<reference key="1">
    <citation type="journal article" date="2018" name="Amino Acids">
        <title>Meucin-49, a multifunctional scorpion venom peptide with bactericidal synergy with neurotoxins.</title>
        <authorList>
            <person name="Gao B."/>
            <person name="Dalziel J."/>
            <person name="Tanzi S."/>
            <person name="Zhu S."/>
        </authorList>
    </citation>
    <scope>NUCLEOTIDE SEQUENCE [MRNA]</scope>
    <scope>PROTEIN SEQUENCE OF 23-41</scope>
    <scope>FUNCTION</scope>
    <scope>CIRCULAR DICHROISM ANALYSIS</scope>
    <scope>MASS SPECTROMETRY</scope>
    <scope>BIOASSAY</scope>
    <scope>TOXIC DOSE</scope>
    <scope>MUTAGENESIS OF 53-ASN--ALA-71</scope>
    <source>
        <tissue>Venom gland</tissue>
    </source>
</reference>
<reference key="2">
    <citation type="submission" date="2009-11" db="UniProtKB">
        <title>Characterization of an antimicrobial peptide from the scorpion Mesobuthus eupeus venom.</title>
        <authorList>
            <person name="Zhu S.Y."/>
            <person name="Gao B."/>
        </authorList>
    </citation>
    <scope>PROTEIN SEQUENCE OF 23-71</scope>
    <scope>FUNCTION</scope>
    <scope>SUBCELLULAR LOCATION</scope>
    <scope>MASS SPECTROMETRY</scope>
    <source>
        <tissue>Venom</tissue>
    </source>
</reference>